<gene>
    <name evidence="1" type="primary">ureF</name>
    <name type="ordered locus">Rmet_0963</name>
</gene>
<protein>
    <recommendedName>
        <fullName evidence="1">Urease accessory protein UreF</fullName>
    </recommendedName>
</protein>
<reference key="1">
    <citation type="journal article" date="2010" name="PLoS ONE">
        <title>The complete genome sequence of Cupriavidus metallidurans strain CH34, a master survivalist in harsh and anthropogenic environments.</title>
        <authorList>
            <person name="Janssen P.J."/>
            <person name="Van Houdt R."/>
            <person name="Moors H."/>
            <person name="Monsieurs P."/>
            <person name="Morin N."/>
            <person name="Michaux A."/>
            <person name="Benotmane M.A."/>
            <person name="Leys N."/>
            <person name="Vallaeys T."/>
            <person name="Lapidus A."/>
            <person name="Monchy S."/>
            <person name="Medigue C."/>
            <person name="Taghavi S."/>
            <person name="McCorkle S."/>
            <person name="Dunn J."/>
            <person name="van der Lelie D."/>
            <person name="Mergeay M."/>
        </authorList>
    </citation>
    <scope>NUCLEOTIDE SEQUENCE [LARGE SCALE GENOMIC DNA]</scope>
    <source>
        <strain>ATCC 43123 / DSM 2839 / NBRC 102507 / CH34</strain>
    </source>
</reference>
<evidence type="ECO:0000255" key="1">
    <source>
        <dbReference type="HAMAP-Rule" id="MF_01385"/>
    </source>
</evidence>
<organism>
    <name type="scientific">Cupriavidus metallidurans (strain ATCC 43123 / DSM 2839 / NBRC 102507 / CH34)</name>
    <name type="common">Ralstonia metallidurans</name>
    <dbReference type="NCBI Taxonomy" id="266264"/>
    <lineage>
        <taxon>Bacteria</taxon>
        <taxon>Pseudomonadati</taxon>
        <taxon>Pseudomonadota</taxon>
        <taxon>Betaproteobacteria</taxon>
        <taxon>Burkholderiales</taxon>
        <taxon>Burkholderiaceae</taxon>
        <taxon>Cupriavidus</taxon>
    </lineage>
</organism>
<accession>Q1LPS7</accession>
<proteinExistence type="inferred from homology"/>
<sequence length="230" mass="25327">MTALPQLISLLHLASPALPIGGFSYSQGLEAAIDCELVRDATTAERWIRDNLLHVQAQCEAPVWLLLHRAWQTQDHASVRQWNDWFHATRETSELRLETEQMGWSLAKLIAQMGWGDDASRDLLRDMRPVCLPTAFSSACVALGIAAREGLAAYLFNWAENQVAAAIKAVPLGQVAGQQMLLGLHQAVLGTVDEAVCRADAVPPLLSTFSPMLGVLSARHETQYSRLFRS</sequence>
<dbReference type="EMBL" id="CP000352">
    <property type="protein sequence ID" value="ABF07849.1"/>
    <property type="molecule type" value="Genomic_DNA"/>
</dbReference>
<dbReference type="RefSeq" id="WP_011515770.1">
    <property type="nucleotide sequence ID" value="NC_007973.1"/>
</dbReference>
<dbReference type="SMR" id="Q1LPS7"/>
<dbReference type="STRING" id="266264.Rmet_0963"/>
<dbReference type="KEGG" id="rme:Rmet_0963"/>
<dbReference type="eggNOG" id="COG0830">
    <property type="taxonomic scope" value="Bacteria"/>
</dbReference>
<dbReference type="HOGENOM" id="CLU_049215_2_1_4"/>
<dbReference type="Proteomes" id="UP000002429">
    <property type="component" value="Chromosome"/>
</dbReference>
<dbReference type="GO" id="GO:0005737">
    <property type="term" value="C:cytoplasm"/>
    <property type="evidence" value="ECO:0007669"/>
    <property type="project" value="UniProtKB-SubCell"/>
</dbReference>
<dbReference type="GO" id="GO:0016151">
    <property type="term" value="F:nickel cation binding"/>
    <property type="evidence" value="ECO:0007669"/>
    <property type="project" value="UniProtKB-UniRule"/>
</dbReference>
<dbReference type="Gene3D" id="1.10.4190.10">
    <property type="entry name" value="Urease accessory protein UreF"/>
    <property type="match status" value="1"/>
</dbReference>
<dbReference type="HAMAP" id="MF_01385">
    <property type="entry name" value="UreF"/>
    <property type="match status" value="1"/>
</dbReference>
<dbReference type="InterPro" id="IPR002639">
    <property type="entry name" value="UreF"/>
</dbReference>
<dbReference type="InterPro" id="IPR038277">
    <property type="entry name" value="UreF_sf"/>
</dbReference>
<dbReference type="PANTHER" id="PTHR33620">
    <property type="entry name" value="UREASE ACCESSORY PROTEIN F"/>
    <property type="match status" value="1"/>
</dbReference>
<dbReference type="PANTHER" id="PTHR33620:SF1">
    <property type="entry name" value="UREASE ACCESSORY PROTEIN F"/>
    <property type="match status" value="1"/>
</dbReference>
<dbReference type="Pfam" id="PF01730">
    <property type="entry name" value="UreF"/>
    <property type="match status" value="1"/>
</dbReference>
<dbReference type="PIRSF" id="PIRSF009467">
    <property type="entry name" value="Ureas_acces_UreF"/>
    <property type="match status" value="1"/>
</dbReference>
<comment type="function">
    <text evidence="1">Required for maturation of urease via the functional incorporation of the urease nickel metallocenter.</text>
</comment>
<comment type="subunit">
    <text evidence="1">UreD, UreF and UreG form a complex that acts as a GTP-hydrolysis-dependent molecular chaperone, activating the urease apoprotein by helping to assemble the nickel containing metallocenter of UreC. The UreE protein probably delivers the nickel.</text>
</comment>
<comment type="subcellular location">
    <subcellularLocation>
        <location evidence="1">Cytoplasm</location>
    </subcellularLocation>
</comment>
<comment type="similarity">
    <text evidence="1">Belongs to the UreF family.</text>
</comment>
<name>UREF_CUPMC</name>
<keyword id="KW-0143">Chaperone</keyword>
<keyword id="KW-0963">Cytoplasm</keyword>
<keyword id="KW-0996">Nickel insertion</keyword>
<keyword id="KW-1185">Reference proteome</keyword>
<feature type="chain" id="PRO_0000344161" description="Urease accessory protein UreF">
    <location>
        <begin position="1"/>
        <end position="230"/>
    </location>
</feature>